<name>COX6A_CYPCA</name>
<dbReference type="EMBL" id="U83907">
    <property type="protein sequence ID" value="AAB58361.1"/>
    <property type="molecule type" value="mRNA"/>
</dbReference>
<dbReference type="SMR" id="O13082"/>
<dbReference type="UniPathway" id="UPA00705"/>
<dbReference type="Proteomes" id="UP000694384">
    <property type="component" value="Unplaced"/>
</dbReference>
<dbReference type="Proteomes" id="UP000694427">
    <property type="component" value="Unplaced"/>
</dbReference>
<dbReference type="Proteomes" id="UP000694700">
    <property type="component" value="Unplaced"/>
</dbReference>
<dbReference type="Proteomes" id="UP000694701">
    <property type="component" value="Unplaced"/>
</dbReference>
<dbReference type="Proteomes" id="UP001155660">
    <property type="component" value="Unplaced"/>
</dbReference>
<dbReference type="GO" id="GO:0005743">
    <property type="term" value="C:mitochondrial inner membrane"/>
    <property type="evidence" value="ECO:0007669"/>
    <property type="project" value="UniProtKB-SubCell"/>
</dbReference>
<dbReference type="GO" id="GO:0030234">
    <property type="term" value="F:enzyme regulator activity"/>
    <property type="evidence" value="ECO:0007669"/>
    <property type="project" value="TreeGrafter"/>
</dbReference>
<dbReference type="GO" id="GO:0016491">
    <property type="term" value="F:oxidoreductase activity"/>
    <property type="evidence" value="ECO:0007669"/>
    <property type="project" value="UniProtKB-KW"/>
</dbReference>
<dbReference type="GO" id="GO:0006123">
    <property type="term" value="P:mitochondrial electron transport, cytochrome c to oxygen"/>
    <property type="evidence" value="ECO:0007669"/>
    <property type="project" value="TreeGrafter"/>
</dbReference>
<dbReference type="CDD" id="cd00925">
    <property type="entry name" value="Cyt_c_Oxidase_VIa"/>
    <property type="match status" value="1"/>
</dbReference>
<dbReference type="FunFam" id="4.10.95.10:FF:000001">
    <property type="entry name" value="Cytochrome c oxidase subunit 6A, mitochondrial"/>
    <property type="match status" value="1"/>
</dbReference>
<dbReference type="Gene3D" id="4.10.95.10">
    <property type="entry name" value="Cytochrome c oxidase, subunit VIa"/>
    <property type="match status" value="1"/>
</dbReference>
<dbReference type="InterPro" id="IPR001349">
    <property type="entry name" value="Cyt_c_oxidase_su6a"/>
</dbReference>
<dbReference type="InterPro" id="IPR018507">
    <property type="entry name" value="Cyt_c_oxidase_su6a_CS"/>
</dbReference>
<dbReference type="InterPro" id="IPR036418">
    <property type="entry name" value="Cyt_c_oxidase_su6a_sf"/>
</dbReference>
<dbReference type="PANTHER" id="PTHR11504">
    <property type="entry name" value="CYTOCHROME C OXIDASE POLYPEPTIDE VIA"/>
    <property type="match status" value="1"/>
</dbReference>
<dbReference type="PANTHER" id="PTHR11504:SF8">
    <property type="entry name" value="CYTOCHROME C OXIDASE SUBUNIT"/>
    <property type="match status" value="1"/>
</dbReference>
<dbReference type="Pfam" id="PF02046">
    <property type="entry name" value="COX6A"/>
    <property type="match status" value="1"/>
</dbReference>
<dbReference type="PIRSF" id="PIRSF000277">
    <property type="entry name" value="COX6A1"/>
    <property type="match status" value="1"/>
</dbReference>
<dbReference type="SUPFAM" id="SSF81411">
    <property type="entry name" value="Mitochondrial cytochrome c oxidase subunit VIa"/>
    <property type="match status" value="1"/>
</dbReference>
<dbReference type="PROSITE" id="PS01329">
    <property type="entry name" value="COX6A"/>
    <property type="match status" value="1"/>
</dbReference>
<comment type="function">
    <text evidence="4">Component of the cytochrome c oxidase, the last enzyme in the mitochondrial electron transport chain which drives oxidative phosphorylation. The respiratory chain contains 3 multisubunit complexes succinate dehydrogenase (complex II, CII), ubiquinol-cytochrome c oxidoreductase (cytochrome b-c1 complex, complex III, CIII) and cytochrome c oxidase (complex IV, CIV), that cooperate to transfer electrons derived from NADH and succinate to molecular oxygen, creating an electrochemical gradient over the inner membrane that drives transmembrane transport and the ATP synthase. Cytochrome c oxidase is the component of the respiratory chain that catalyzes the reduction of oxygen to water. Electrons originating from reduced cytochrome c in the intermembrane space (IMS) are transferred via the dinuclear copper A center (CU(A)) of subunit 2 and heme A of subunit 1 to the active site in subunit 1, a binuclear center (BNC) formed by heme A3 and copper B (CU(B)). The BNC reduces molecular oxygen to 2 water molecules unsing 4 electrons from cytochrome c in the IMS and 4 protons from the mitochondrial matrix.</text>
</comment>
<comment type="pathway">
    <text evidence="4">Energy metabolism; oxidative phosphorylation.</text>
</comment>
<comment type="subunit">
    <text evidence="3">Component of the cytochrome c oxidase (complex IV, CIV), a multisubunit enzyme composed of 14 subunits. The complex is composed of a catalytic core of 3 subunits MT-CO1, MT-CO2 and MT-CO3, encoded in the mitochondrial DNA, and 11 supernumerary subunits COX4I, COX5A, COX5B, COX6A, COX6B, COX6C, COX7A, COX7B, COX7C, COX8 and NDUFA4, which are encoded in the nuclear genome. The complex exists as a monomer or a dimer and forms supercomplexes (SCs) in the inner mitochondrial membrane with NADH-ubiquinone oxidoreductase (complex I, CI) and ubiquinol-cytochrome c oxidoreductase (cytochrome b-c1 complex, complex III, CIII), resulting in different assemblies (supercomplex SCI(1)III(2)IV(1) and megacomplex MCI(2)III(2)IV(2)).</text>
</comment>
<comment type="subcellular location">
    <subcellularLocation>
        <location evidence="3">Mitochondrion inner membrane</location>
        <topology evidence="3">Single-pass membrane protein</topology>
    </subcellularLocation>
</comment>
<comment type="similarity">
    <text evidence="6">Belongs to the cytochrome c oxidase subunit 6A family.</text>
</comment>
<reference key="1">
    <citation type="journal article" date="1997" name="Biochim. Biophys. Acta">
        <title>The cDNA sequences of cytochrome c oxidase subunit VIa from carp and rainbow trout suggest the absence of isoforms in fishes.</title>
        <authorList>
            <person name="Huttemann M."/>
            <person name="Exner S."/>
            <person name="Arnold S."/>
            <person name="Lottspeich F."/>
            <person name="Kadenbach B."/>
        </authorList>
    </citation>
    <scope>NUCLEOTIDE SEQUENCE [MRNA]</scope>
    <source>
        <tissue>Heart</tissue>
    </source>
</reference>
<feature type="transit peptide" description="Mitochondrion" evidence="1">
    <location>
        <begin position="1"/>
        <end position="14"/>
    </location>
</feature>
<feature type="chain" id="PRO_0000006123" description="Cytochrome c oxidase subunit 6A, mitochondrial">
    <location>
        <begin position="15"/>
        <end position="102"/>
    </location>
</feature>
<feature type="topological domain" description="Mitochondrial matrix" evidence="2">
    <location>
        <begin position="15"/>
        <end position="25"/>
    </location>
</feature>
<feature type="transmembrane region" description="Helical" evidence="2">
    <location>
        <begin position="26"/>
        <end position="50"/>
    </location>
</feature>
<feature type="topological domain" description="Mitochondrial intermembrane" evidence="2">
    <location>
        <begin position="51"/>
        <end position="102"/>
    </location>
</feature>
<feature type="region of interest" description="Disordered" evidence="5">
    <location>
        <begin position="1"/>
        <end position="25"/>
    </location>
</feature>
<accession>O13082</accession>
<sequence length="102" mass="11175">MAMSPAATVARRRLAAASQGSHEGGARTWKILSFVLALPGVGVCMANAYMKMQAHSHDPPEFVPYPHLRIRTKPWPWGDGNHSLFHNAHTNALPTGYEGPHH</sequence>
<keyword id="KW-0472">Membrane</keyword>
<keyword id="KW-0496">Mitochondrion</keyword>
<keyword id="KW-0999">Mitochondrion inner membrane</keyword>
<keyword id="KW-0560">Oxidoreductase</keyword>
<keyword id="KW-1185">Reference proteome</keyword>
<keyword id="KW-0809">Transit peptide</keyword>
<keyword id="KW-0812">Transmembrane</keyword>
<keyword id="KW-1133">Transmembrane helix</keyword>
<organism>
    <name type="scientific">Cyprinus carpio</name>
    <name type="common">Common carp</name>
    <dbReference type="NCBI Taxonomy" id="7962"/>
    <lineage>
        <taxon>Eukaryota</taxon>
        <taxon>Metazoa</taxon>
        <taxon>Chordata</taxon>
        <taxon>Craniata</taxon>
        <taxon>Vertebrata</taxon>
        <taxon>Euteleostomi</taxon>
        <taxon>Actinopterygii</taxon>
        <taxon>Neopterygii</taxon>
        <taxon>Teleostei</taxon>
        <taxon>Ostariophysi</taxon>
        <taxon>Cypriniformes</taxon>
        <taxon>Cyprinidae</taxon>
        <taxon>Cyprininae</taxon>
        <taxon>Cyprinus</taxon>
    </lineage>
</organism>
<protein>
    <recommendedName>
        <fullName>Cytochrome c oxidase subunit 6A, mitochondrial</fullName>
    </recommendedName>
    <alternativeName>
        <fullName>Cytochrome c oxidase polypeptide VIa</fullName>
    </alternativeName>
</protein>
<proteinExistence type="inferred from homology"/>
<evidence type="ECO:0000250" key="1"/>
<evidence type="ECO:0000250" key="2">
    <source>
        <dbReference type="UniProtKB" id="P07471"/>
    </source>
</evidence>
<evidence type="ECO:0000250" key="3">
    <source>
        <dbReference type="UniProtKB" id="P12074"/>
    </source>
</evidence>
<evidence type="ECO:0000250" key="4">
    <source>
        <dbReference type="UniProtKB" id="P32799"/>
    </source>
</evidence>
<evidence type="ECO:0000256" key="5">
    <source>
        <dbReference type="SAM" id="MobiDB-lite"/>
    </source>
</evidence>
<evidence type="ECO:0000305" key="6"/>